<sequence>MKFLILFALVAVAAAGQVKFTDCGKKEIASVAVDGCEGDLCVIHKSKPVHVIAEFTANQDTCKIEVKVTGQLNGLEVPIPGIETDGCKVLKCPLKKGTKYTMNYSVNVPSVVPNIKTVVKLLATGEHGVLACGAVNTDVKP</sequence>
<feature type="signal peptide" evidence="5">
    <location>
        <begin position="1"/>
        <end position="15"/>
    </location>
</feature>
<feature type="chain" id="PRO_0000019865" description="Mite group 2 allergen Tyr p 2">
    <location>
        <begin position="16"/>
        <end position="141"/>
    </location>
</feature>
<feature type="glycosylation site" description="N-linked (GlcNAc...) asparagine" evidence="2">
    <location>
        <position position="103"/>
    </location>
</feature>
<feature type="disulfide bond" evidence="1">
    <location>
        <begin position="23"/>
        <end position="132"/>
    </location>
</feature>
<feature type="disulfide bond" evidence="1">
    <location>
        <begin position="36"/>
        <end position="41"/>
    </location>
</feature>
<feature type="disulfide bond" evidence="1">
    <location>
        <begin position="87"/>
        <end position="92"/>
    </location>
</feature>
<reference key="1">
    <citation type="journal article" date="1998" name="Eur. J. Biochem.">
        <title>Cloning and characterisation of a group II allergen from the dust mite Tyrophagus putrescentiae.</title>
        <authorList>
            <person name="Eriksson T.L.J."/>
            <person name="Johansson E."/>
            <person name="Whitley P."/>
            <person name="Schmidt M."/>
            <person name="Elsayed S."/>
            <person name="van Hage-Hamsten M."/>
        </authorList>
    </citation>
    <scope>NUCLEOTIDE SEQUENCE [MRNA]</scope>
    <scope>PROTEIN SEQUENCE OF 16-22</scope>
    <scope>ALLERGEN</scope>
</reference>
<reference key="2">
    <citation type="journal article" date="2010" name="Int. Arch. Allergy Immunol.">
        <title>Prevalence of Tyrophagus putrescentiae hypersensitivity in subjects over 70 years of age in a veterans' nursing home in Taiwan.</title>
        <authorList>
            <person name="Liao E.C."/>
            <person name="Ho C.M."/>
            <person name="Tsai J.J."/>
        </authorList>
    </citation>
    <scope>ALLERGEN</scope>
</reference>
<reference key="3">
    <citation type="journal article" date="2010" name="J. Clin. Immunol.">
        <title>Dermatophagoides pteronyssinus and Tyrophagus putrescentiae allergy in allergic rhinitis caused by cross-reactivity not dual-sensitization.</title>
        <authorList>
            <person name="Liao E.C."/>
            <person name="Ho C.M."/>
            <person name="Lin M.Y."/>
            <person name="Tsai J.J."/>
        </authorList>
    </citation>
    <scope>ALLERGEN</scope>
    <scope>3D-STRUCTURE MODELING</scope>
</reference>
<keyword id="KW-0020">Allergen</keyword>
<keyword id="KW-0903">Direct protein sequencing</keyword>
<keyword id="KW-1015">Disulfide bond</keyword>
<keyword id="KW-0325">Glycoprotein</keyword>
<keyword id="KW-0964">Secreted</keyword>
<keyword id="KW-0732">Signal</keyword>
<name>ALL2_TYRPU</name>
<protein>
    <recommendedName>
        <fullName evidence="6">Mite group 2 allergen Tyr p 2</fullName>
    </recommendedName>
    <allergenName evidence="7">Tyr p 2.0101</allergenName>
</protein>
<dbReference type="EMBL" id="Y12690">
    <property type="protein sequence ID" value="CAA73221.1"/>
    <property type="molecule type" value="mRNA"/>
</dbReference>
<dbReference type="SMR" id="O02380"/>
<dbReference type="Allergome" id="3511">
    <property type="allergen name" value="Tyr p 2.0101"/>
</dbReference>
<dbReference type="Allergome" id="657">
    <property type="allergen name" value="Tyr p 2"/>
</dbReference>
<dbReference type="GO" id="GO:0005576">
    <property type="term" value="C:extracellular region"/>
    <property type="evidence" value="ECO:0007669"/>
    <property type="project" value="UniProtKB-SubCell"/>
</dbReference>
<dbReference type="GO" id="GO:0032934">
    <property type="term" value="F:sterol binding"/>
    <property type="evidence" value="ECO:0007669"/>
    <property type="project" value="InterPro"/>
</dbReference>
<dbReference type="GO" id="GO:0015918">
    <property type="term" value="P:sterol transport"/>
    <property type="evidence" value="ECO:0007669"/>
    <property type="project" value="InterPro"/>
</dbReference>
<dbReference type="CDD" id="cd00918">
    <property type="entry name" value="Der-p2_like"/>
    <property type="match status" value="1"/>
</dbReference>
<dbReference type="FunFam" id="2.60.40.770:FF:000001">
    <property type="entry name" value="NPC intracellular cholesterol transporter 2"/>
    <property type="match status" value="1"/>
</dbReference>
<dbReference type="Gene3D" id="2.60.40.770">
    <property type="match status" value="1"/>
</dbReference>
<dbReference type="InterPro" id="IPR014756">
    <property type="entry name" value="Ig_E-set"/>
</dbReference>
<dbReference type="InterPro" id="IPR003172">
    <property type="entry name" value="ML_dom"/>
</dbReference>
<dbReference type="InterPro" id="IPR039670">
    <property type="entry name" value="NPC2-like"/>
</dbReference>
<dbReference type="PANTHER" id="PTHR11306">
    <property type="entry name" value="NIEMANN PICK TYPE C2 PROTEIN NPC2-RELATED"/>
    <property type="match status" value="1"/>
</dbReference>
<dbReference type="PANTHER" id="PTHR11306:SF68">
    <property type="entry name" value="NPC INTRACELLULAR CHOLESTEROL TRANSPORTER 2"/>
    <property type="match status" value="1"/>
</dbReference>
<dbReference type="Pfam" id="PF02221">
    <property type="entry name" value="E1_DerP2_DerF2"/>
    <property type="match status" value="1"/>
</dbReference>
<dbReference type="SMART" id="SM00737">
    <property type="entry name" value="ML"/>
    <property type="match status" value="1"/>
</dbReference>
<dbReference type="SUPFAM" id="SSF81296">
    <property type="entry name" value="E set domains"/>
    <property type="match status" value="1"/>
</dbReference>
<organism>
    <name type="scientific">Tyrophagus putrescentiae</name>
    <name type="common">Mold mite</name>
    <name type="synonym">Acarus putrescentiae</name>
    <dbReference type="NCBI Taxonomy" id="59818"/>
    <lineage>
        <taxon>Eukaryota</taxon>
        <taxon>Metazoa</taxon>
        <taxon>Ecdysozoa</taxon>
        <taxon>Arthropoda</taxon>
        <taxon>Chelicerata</taxon>
        <taxon>Arachnida</taxon>
        <taxon>Acari</taxon>
        <taxon>Acariformes</taxon>
        <taxon>Sarcoptiformes</taxon>
        <taxon>Astigmata</taxon>
        <taxon>Acaroidea</taxon>
        <taxon>Acaridae</taxon>
        <taxon>Tyrophaginae</taxon>
        <taxon>Tyrophagus</taxon>
    </lineage>
</organism>
<comment type="subcellular location">
    <subcellularLocation>
        <location>Secreted</location>
    </subcellularLocation>
</comment>
<comment type="allergen">
    <text evidence="3 4 5 7">Causes an allergic reaction in human. Binds to IgE of patients allergic to storage mite T.putrescentiae (PubMed:20197679, PubMed:20683648, PubMed:9492316). Binds to IgE in 53% of the 44 elderly patients (aged 70-90) tested (PubMed:20197679). Binds to IgE in 73% of the 22 young adult rhinitis patients tested allergic to mites (both T.putrescentiae and D.pteronyssinus) (PubMed:20683648). Common symptoms of mite allergy are bronchial asthma, allergic rhinitis and conjunctivitis (Probable).</text>
</comment>
<comment type="similarity">
    <text evidence="7">Belongs to the NPC2 family.</text>
</comment>
<evidence type="ECO:0000250" key="1"/>
<evidence type="ECO:0000255" key="2"/>
<evidence type="ECO:0000269" key="3">
    <source>
    </source>
</evidence>
<evidence type="ECO:0000269" key="4">
    <source>
    </source>
</evidence>
<evidence type="ECO:0000269" key="5">
    <source>
    </source>
</evidence>
<evidence type="ECO:0000303" key="6">
    <source>
    </source>
</evidence>
<evidence type="ECO:0000305" key="7"/>
<proteinExistence type="evidence at protein level"/>
<accession>O02380</accession>